<feature type="chain" id="PRO_0000427309" description="Uncharacterized HTH-type transcriptional regulator MT3179">
    <location>
        <begin position="1"/>
        <end position="158"/>
    </location>
</feature>
<feature type="domain" description="HTH hxlR-type" evidence="1">
    <location>
        <begin position="13"/>
        <end position="110"/>
    </location>
</feature>
<sequence length="158" mass="17815">MAVSDLSHRFEGESVGRALELVGERWTLLILREAFFGVRRFGQLARNLGIPRPTLSSRLRMLVELGLFDRVPYSSDPERHEYRLTEAGRDLFAAIVVLMQWGDEYLPRPEGPPIKLRHHTCGEHADPRLICTHCGEEITARNVTPEPGPGFKAKLASS</sequence>
<evidence type="ECO:0000255" key="1">
    <source>
        <dbReference type="PROSITE-ProRule" id="PRU00435"/>
    </source>
</evidence>
<proteinExistence type="predicted"/>
<reference key="1">
    <citation type="journal article" date="2002" name="J. Bacteriol.">
        <title>Whole-genome comparison of Mycobacterium tuberculosis clinical and laboratory strains.</title>
        <authorList>
            <person name="Fleischmann R.D."/>
            <person name="Alland D."/>
            <person name="Eisen J.A."/>
            <person name="Carpenter L."/>
            <person name="White O."/>
            <person name="Peterson J.D."/>
            <person name="DeBoy R.T."/>
            <person name="Dodson R.J."/>
            <person name="Gwinn M.L."/>
            <person name="Haft D.H."/>
            <person name="Hickey E.K."/>
            <person name="Kolonay J.F."/>
            <person name="Nelson W.C."/>
            <person name="Umayam L.A."/>
            <person name="Ermolaeva M.D."/>
            <person name="Salzberg S.L."/>
            <person name="Delcher A."/>
            <person name="Utterback T.R."/>
            <person name="Weidman J.F."/>
            <person name="Khouri H.M."/>
            <person name="Gill J."/>
            <person name="Mikula A."/>
            <person name="Bishai W."/>
            <person name="Jacobs W.R. Jr."/>
            <person name="Venter J.C."/>
            <person name="Fraser C.M."/>
        </authorList>
    </citation>
    <scope>NUCLEOTIDE SEQUENCE [LARGE SCALE GENOMIC DNA]</scope>
    <source>
        <strain>CDC 1551 / Oshkosh</strain>
    </source>
</reference>
<protein>
    <recommendedName>
        <fullName>Uncharacterized HTH-type transcriptional regulator MT3179</fullName>
    </recommendedName>
</protein>
<dbReference type="EMBL" id="AE000516">
    <property type="protein sequence ID" value="AAK47517.1"/>
    <property type="molecule type" value="Genomic_DNA"/>
</dbReference>
<dbReference type="PIR" id="F70918">
    <property type="entry name" value="F70918"/>
</dbReference>
<dbReference type="RefSeq" id="WP_003917731.1">
    <property type="nucleotide sequence ID" value="NC_002755.2"/>
</dbReference>
<dbReference type="SMR" id="P9WMG2"/>
<dbReference type="KEGG" id="mtc:MT3179"/>
<dbReference type="PATRIC" id="fig|83331.31.peg.3427"/>
<dbReference type="HOGENOM" id="CLU_111585_0_0_11"/>
<dbReference type="Proteomes" id="UP000001020">
    <property type="component" value="Chromosome"/>
</dbReference>
<dbReference type="GO" id="GO:0003677">
    <property type="term" value="F:DNA binding"/>
    <property type="evidence" value="ECO:0007669"/>
    <property type="project" value="UniProtKB-KW"/>
</dbReference>
<dbReference type="CDD" id="cd00090">
    <property type="entry name" value="HTH_ARSR"/>
    <property type="match status" value="1"/>
</dbReference>
<dbReference type="Gene3D" id="1.10.10.10">
    <property type="entry name" value="Winged helix-like DNA-binding domain superfamily/Winged helix DNA-binding domain"/>
    <property type="match status" value="1"/>
</dbReference>
<dbReference type="InterPro" id="IPR011991">
    <property type="entry name" value="ArsR-like_HTH"/>
</dbReference>
<dbReference type="InterPro" id="IPR002577">
    <property type="entry name" value="HTH_HxlR"/>
</dbReference>
<dbReference type="InterPro" id="IPR036388">
    <property type="entry name" value="WH-like_DNA-bd_sf"/>
</dbReference>
<dbReference type="InterPro" id="IPR036390">
    <property type="entry name" value="WH_DNA-bd_sf"/>
</dbReference>
<dbReference type="PANTHER" id="PTHR33204">
    <property type="entry name" value="TRANSCRIPTIONAL REGULATOR, MARR FAMILY"/>
    <property type="match status" value="1"/>
</dbReference>
<dbReference type="PANTHER" id="PTHR33204:SF18">
    <property type="entry name" value="TRANSCRIPTIONAL REGULATORY PROTEIN"/>
    <property type="match status" value="1"/>
</dbReference>
<dbReference type="Pfam" id="PF01638">
    <property type="entry name" value="HxlR"/>
    <property type="match status" value="1"/>
</dbReference>
<dbReference type="SUPFAM" id="SSF46785">
    <property type="entry name" value="Winged helix' DNA-binding domain"/>
    <property type="match status" value="1"/>
</dbReference>
<dbReference type="PROSITE" id="PS51118">
    <property type="entry name" value="HTH_HXLR"/>
    <property type="match status" value="1"/>
</dbReference>
<keyword id="KW-0238">DNA-binding</keyword>
<keyword id="KW-1185">Reference proteome</keyword>
<keyword id="KW-0804">Transcription</keyword>
<keyword id="KW-0805">Transcription regulation</keyword>
<name>Y3095_MYCTO</name>
<accession>P9WMG2</accession>
<accession>L0TEB6</accession>
<accession>O05774</accession>
<accession>P0A648</accession>
<gene>
    <name type="ordered locus">MT3179</name>
</gene>
<organism>
    <name type="scientific">Mycobacterium tuberculosis (strain CDC 1551 / Oshkosh)</name>
    <dbReference type="NCBI Taxonomy" id="83331"/>
    <lineage>
        <taxon>Bacteria</taxon>
        <taxon>Bacillati</taxon>
        <taxon>Actinomycetota</taxon>
        <taxon>Actinomycetes</taxon>
        <taxon>Mycobacteriales</taxon>
        <taxon>Mycobacteriaceae</taxon>
        <taxon>Mycobacterium</taxon>
        <taxon>Mycobacterium tuberculosis complex</taxon>
    </lineage>
</organism>